<evidence type="ECO:0000250" key="1"/>
<evidence type="ECO:0000256" key="2">
    <source>
        <dbReference type="SAM" id="MobiDB-lite"/>
    </source>
</evidence>
<evidence type="ECO:0000305" key="3"/>
<feature type="chain" id="PRO_0000096311" description="MAD2L1-binding protein">
    <location>
        <begin position="1"/>
        <end position="276"/>
    </location>
</feature>
<feature type="region of interest" description="Disordered" evidence="2">
    <location>
        <begin position="1"/>
        <end position="30"/>
    </location>
</feature>
<feature type="region of interest" description="Interaction with MAD2L1" evidence="1">
    <location>
        <begin position="49"/>
        <end position="81"/>
    </location>
</feature>
<feature type="compositionally biased region" description="Acidic residues" evidence="2">
    <location>
        <begin position="1"/>
        <end position="10"/>
    </location>
</feature>
<feature type="sequence conflict" description="In Ref. 1; BAB22054." evidence="3" ref="1">
    <original>EP</original>
    <variation>DA</variation>
    <location>
        <begin position="51"/>
        <end position="52"/>
    </location>
</feature>
<feature type="sequence conflict" description="In Ref. 2; AAH05768." evidence="3" ref="2">
    <original>V</original>
    <variation>A</variation>
    <location>
        <position position="104"/>
    </location>
</feature>
<sequence>MAASGEEDMSELSPAAAPNLDWYEKPEETHAPEVDLETVIPPAQEPSNPAEPFCPRDLVPVVFPGPVSQEDCCQFTCELLKHILYQRHQLPLPYEQLKHFYRKVPQAEDTARKKAWLATEARNRKCQQALAELESVLSHLRDFFARTLVPQVLILLGGNALSPKEFYELDLSRLAPFGVDQGLNTAACLRRLFRAIFLADPFSELQTPPLMGTIVMVQGHRDCGEDWFQPKLNYRVPSRGHKLTVTLSCGRPSVPAMASEDYIWFQAPVTLKGFHE</sequence>
<organism>
    <name type="scientific">Mus musculus</name>
    <name type="common">Mouse</name>
    <dbReference type="NCBI Taxonomy" id="10090"/>
    <lineage>
        <taxon>Eukaryota</taxon>
        <taxon>Metazoa</taxon>
        <taxon>Chordata</taxon>
        <taxon>Craniata</taxon>
        <taxon>Vertebrata</taxon>
        <taxon>Euteleostomi</taxon>
        <taxon>Mammalia</taxon>
        <taxon>Eutheria</taxon>
        <taxon>Euarchontoglires</taxon>
        <taxon>Glires</taxon>
        <taxon>Rodentia</taxon>
        <taxon>Myomorpha</taxon>
        <taxon>Muroidea</taxon>
        <taxon>Muridae</taxon>
        <taxon>Murinae</taxon>
        <taxon>Mus</taxon>
        <taxon>Mus</taxon>
    </lineage>
</organism>
<gene>
    <name type="primary">Mad2l1bp</name>
    <name type="synonym">Mad2lbp</name>
</gene>
<dbReference type="EMBL" id="AK002377">
    <property type="protein sequence ID" value="BAB22054.1"/>
    <property type="molecule type" value="mRNA"/>
</dbReference>
<dbReference type="EMBL" id="AK004224">
    <property type="protein sequence ID" value="BAB23226.1"/>
    <property type="molecule type" value="mRNA"/>
</dbReference>
<dbReference type="EMBL" id="BC005768">
    <property type="protein sequence ID" value="AAH05768.1"/>
    <property type="molecule type" value="mRNA"/>
</dbReference>
<dbReference type="CCDS" id="CCDS28821.1"/>
<dbReference type="RefSeq" id="NP_079925.2">
    <property type="nucleotide sequence ID" value="NM_025649.3"/>
</dbReference>
<dbReference type="SMR" id="Q9DCX1"/>
<dbReference type="BioGRID" id="211577">
    <property type="interactions" value="30"/>
</dbReference>
<dbReference type="FunCoup" id="Q9DCX1">
    <property type="interactions" value="4035"/>
</dbReference>
<dbReference type="IntAct" id="Q9DCX1">
    <property type="interactions" value="32"/>
</dbReference>
<dbReference type="MINT" id="Q9DCX1"/>
<dbReference type="STRING" id="10090.ENSMUSP00000125915"/>
<dbReference type="PhosphoSitePlus" id="Q9DCX1"/>
<dbReference type="PaxDb" id="10090-ENSMUSP00000125915"/>
<dbReference type="PeptideAtlas" id="Q9DCX1"/>
<dbReference type="ProteomicsDB" id="252757"/>
<dbReference type="Pumba" id="Q9DCX1"/>
<dbReference type="Antibodypedia" id="30554">
    <property type="antibodies" value="317 antibodies from 32 providers"/>
</dbReference>
<dbReference type="DNASU" id="66591"/>
<dbReference type="Ensembl" id="ENSMUST00000171172.3">
    <property type="protein sequence ID" value="ENSMUSP00000125915.2"/>
    <property type="gene ID" value="ENSMUSG00000034509.10"/>
</dbReference>
<dbReference type="GeneID" id="66591"/>
<dbReference type="KEGG" id="mmu:66591"/>
<dbReference type="UCSC" id="uc008cru.2">
    <property type="organism name" value="mouse"/>
</dbReference>
<dbReference type="AGR" id="MGI:1913841"/>
<dbReference type="CTD" id="9587"/>
<dbReference type="MGI" id="MGI:1913841">
    <property type="gene designation" value="Mad2l1bp"/>
</dbReference>
<dbReference type="VEuPathDB" id="HostDB:ENSMUSG00000034509"/>
<dbReference type="eggNOG" id="ENOG502QTUF">
    <property type="taxonomic scope" value="Eukaryota"/>
</dbReference>
<dbReference type="GeneTree" id="ENSGT00390000003812"/>
<dbReference type="HOGENOM" id="CLU_079654_0_0_1"/>
<dbReference type="InParanoid" id="Q9DCX1"/>
<dbReference type="OMA" id="KCQQVLM"/>
<dbReference type="OrthoDB" id="6334764at2759"/>
<dbReference type="PhylomeDB" id="Q9DCX1"/>
<dbReference type="TreeFam" id="TF331730"/>
<dbReference type="BioGRID-ORCS" id="66591">
    <property type="hits" value="11 hits in 80 CRISPR screens"/>
</dbReference>
<dbReference type="ChiTaRS" id="Mad2l1bp">
    <property type="organism name" value="mouse"/>
</dbReference>
<dbReference type="PRO" id="PR:Q9DCX1"/>
<dbReference type="Proteomes" id="UP000000589">
    <property type="component" value="Chromosome 17"/>
</dbReference>
<dbReference type="RNAct" id="Q9DCX1">
    <property type="molecule type" value="protein"/>
</dbReference>
<dbReference type="Bgee" id="ENSMUSG00000034509">
    <property type="expression patterns" value="Expressed in ileal epithelium and 228 other cell types or tissues"/>
</dbReference>
<dbReference type="GO" id="GO:0005737">
    <property type="term" value="C:cytoplasm"/>
    <property type="evidence" value="ECO:0007669"/>
    <property type="project" value="UniProtKB-KW"/>
</dbReference>
<dbReference type="GO" id="GO:0031965">
    <property type="term" value="C:nuclear membrane"/>
    <property type="evidence" value="ECO:0007669"/>
    <property type="project" value="Ensembl"/>
</dbReference>
<dbReference type="GO" id="GO:0005730">
    <property type="term" value="C:nucleolus"/>
    <property type="evidence" value="ECO:0007669"/>
    <property type="project" value="Ensembl"/>
</dbReference>
<dbReference type="GO" id="GO:0005654">
    <property type="term" value="C:nucleoplasm"/>
    <property type="evidence" value="ECO:0007669"/>
    <property type="project" value="UniProtKB-SubCell"/>
</dbReference>
<dbReference type="GO" id="GO:0005634">
    <property type="term" value="C:nucleus"/>
    <property type="evidence" value="ECO:0000266"/>
    <property type="project" value="MGI"/>
</dbReference>
<dbReference type="GO" id="GO:0005819">
    <property type="term" value="C:spindle"/>
    <property type="evidence" value="ECO:0007669"/>
    <property type="project" value="UniProtKB-SubCell"/>
</dbReference>
<dbReference type="GO" id="GO:1902426">
    <property type="term" value="P:deactivation of mitotic spindle assembly checkpoint"/>
    <property type="evidence" value="ECO:0007669"/>
    <property type="project" value="Ensembl"/>
</dbReference>
<dbReference type="GO" id="GO:0007094">
    <property type="term" value="P:mitotic spindle assembly checkpoint signaling"/>
    <property type="evidence" value="ECO:0000266"/>
    <property type="project" value="MGI"/>
</dbReference>
<dbReference type="GO" id="GO:0007096">
    <property type="term" value="P:regulation of exit from mitosis"/>
    <property type="evidence" value="ECO:0007669"/>
    <property type="project" value="Ensembl"/>
</dbReference>
<dbReference type="Gene3D" id="3.30.900.20">
    <property type="match status" value="1"/>
</dbReference>
<dbReference type="InterPro" id="IPR009511">
    <property type="entry name" value="MAD1/Cdc20-bound-Mad2-bd"/>
</dbReference>
<dbReference type="InterPro" id="IPR053729">
    <property type="entry name" value="MAD2L1BP_domain_sf"/>
</dbReference>
<dbReference type="PANTHER" id="PTHR15681">
    <property type="entry name" value="MAD2L1-BINDING PROTEIN"/>
    <property type="match status" value="1"/>
</dbReference>
<dbReference type="PANTHER" id="PTHR15681:SF1">
    <property type="entry name" value="MAD2L1-BINDING PROTEIN"/>
    <property type="match status" value="1"/>
</dbReference>
<dbReference type="Pfam" id="PF06581">
    <property type="entry name" value="p31comet"/>
    <property type="match status" value="1"/>
</dbReference>
<keyword id="KW-0963">Cytoplasm</keyword>
<keyword id="KW-0206">Cytoskeleton</keyword>
<keyword id="KW-0539">Nucleus</keyword>
<keyword id="KW-1185">Reference proteome</keyword>
<reference key="1">
    <citation type="journal article" date="2005" name="Science">
        <title>The transcriptional landscape of the mammalian genome.</title>
        <authorList>
            <person name="Carninci P."/>
            <person name="Kasukawa T."/>
            <person name="Katayama S."/>
            <person name="Gough J."/>
            <person name="Frith M.C."/>
            <person name="Maeda N."/>
            <person name="Oyama R."/>
            <person name="Ravasi T."/>
            <person name="Lenhard B."/>
            <person name="Wells C."/>
            <person name="Kodzius R."/>
            <person name="Shimokawa K."/>
            <person name="Bajic V.B."/>
            <person name="Brenner S.E."/>
            <person name="Batalov S."/>
            <person name="Forrest A.R."/>
            <person name="Zavolan M."/>
            <person name="Davis M.J."/>
            <person name="Wilming L.G."/>
            <person name="Aidinis V."/>
            <person name="Allen J.E."/>
            <person name="Ambesi-Impiombato A."/>
            <person name="Apweiler R."/>
            <person name="Aturaliya R.N."/>
            <person name="Bailey T.L."/>
            <person name="Bansal M."/>
            <person name="Baxter L."/>
            <person name="Beisel K.W."/>
            <person name="Bersano T."/>
            <person name="Bono H."/>
            <person name="Chalk A.M."/>
            <person name="Chiu K.P."/>
            <person name="Choudhary V."/>
            <person name="Christoffels A."/>
            <person name="Clutterbuck D.R."/>
            <person name="Crowe M.L."/>
            <person name="Dalla E."/>
            <person name="Dalrymple B.P."/>
            <person name="de Bono B."/>
            <person name="Della Gatta G."/>
            <person name="di Bernardo D."/>
            <person name="Down T."/>
            <person name="Engstrom P."/>
            <person name="Fagiolini M."/>
            <person name="Faulkner G."/>
            <person name="Fletcher C.F."/>
            <person name="Fukushima T."/>
            <person name="Furuno M."/>
            <person name="Futaki S."/>
            <person name="Gariboldi M."/>
            <person name="Georgii-Hemming P."/>
            <person name="Gingeras T.R."/>
            <person name="Gojobori T."/>
            <person name="Green R.E."/>
            <person name="Gustincich S."/>
            <person name="Harbers M."/>
            <person name="Hayashi Y."/>
            <person name="Hensch T.K."/>
            <person name="Hirokawa N."/>
            <person name="Hill D."/>
            <person name="Huminiecki L."/>
            <person name="Iacono M."/>
            <person name="Ikeo K."/>
            <person name="Iwama A."/>
            <person name="Ishikawa T."/>
            <person name="Jakt M."/>
            <person name="Kanapin A."/>
            <person name="Katoh M."/>
            <person name="Kawasawa Y."/>
            <person name="Kelso J."/>
            <person name="Kitamura H."/>
            <person name="Kitano H."/>
            <person name="Kollias G."/>
            <person name="Krishnan S.P."/>
            <person name="Kruger A."/>
            <person name="Kummerfeld S.K."/>
            <person name="Kurochkin I.V."/>
            <person name="Lareau L.F."/>
            <person name="Lazarevic D."/>
            <person name="Lipovich L."/>
            <person name="Liu J."/>
            <person name="Liuni S."/>
            <person name="McWilliam S."/>
            <person name="Madan Babu M."/>
            <person name="Madera M."/>
            <person name="Marchionni L."/>
            <person name="Matsuda H."/>
            <person name="Matsuzawa S."/>
            <person name="Miki H."/>
            <person name="Mignone F."/>
            <person name="Miyake S."/>
            <person name="Morris K."/>
            <person name="Mottagui-Tabar S."/>
            <person name="Mulder N."/>
            <person name="Nakano N."/>
            <person name="Nakauchi H."/>
            <person name="Ng P."/>
            <person name="Nilsson R."/>
            <person name="Nishiguchi S."/>
            <person name="Nishikawa S."/>
            <person name="Nori F."/>
            <person name="Ohara O."/>
            <person name="Okazaki Y."/>
            <person name="Orlando V."/>
            <person name="Pang K.C."/>
            <person name="Pavan W.J."/>
            <person name="Pavesi G."/>
            <person name="Pesole G."/>
            <person name="Petrovsky N."/>
            <person name="Piazza S."/>
            <person name="Reed J."/>
            <person name="Reid J.F."/>
            <person name="Ring B.Z."/>
            <person name="Ringwald M."/>
            <person name="Rost B."/>
            <person name="Ruan Y."/>
            <person name="Salzberg S.L."/>
            <person name="Sandelin A."/>
            <person name="Schneider C."/>
            <person name="Schoenbach C."/>
            <person name="Sekiguchi K."/>
            <person name="Semple C.A."/>
            <person name="Seno S."/>
            <person name="Sessa L."/>
            <person name="Sheng Y."/>
            <person name="Shibata Y."/>
            <person name="Shimada H."/>
            <person name="Shimada K."/>
            <person name="Silva D."/>
            <person name="Sinclair B."/>
            <person name="Sperling S."/>
            <person name="Stupka E."/>
            <person name="Sugiura K."/>
            <person name="Sultana R."/>
            <person name="Takenaka Y."/>
            <person name="Taki K."/>
            <person name="Tammoja K."/>
            <person name="Tan S.L."/>
            <person name="Tang S."/>
            <person name="Taylor M.S."/>
            <person name="Tegner J."/>
            <person name="Teichmann S.A."/>
            <person name="Ueda H.R."/>
            <person name="van Nimwegen E."/>
            <person name="Verardo R."/>
            <person name="Wei C.L."/>
            <person name="Yagi K."/>
            <person name="Yamanishi H."/>
            <person name="Zabarovsky E."/>
            <person name="Zhu S."/>
            <person name="Zimmer A."/>
            <person name="Hide W."/>
            <person name="Bult C."/>
            <person name="Grimmond S.M."/>
            <person name="Teasdale R.D."/>
            <person name="Liu E.T."/>
            <person name="Brusic V."/>
            <person name="Quackenbush J."/>
            <person name="Wahlestedt C."/>
            <person name="Mattick J.S."/>
            <person name="Hume D.A."/>
            <person name="Kai C."/>
            <person name="Sasaki D."/>
            <person name="Tomaru Y."/>
            <person name="Fukuda S."/>
            <person name="Kanamori-Katayama M."/>
            <person name="Suzuki M."/>
            <person name="Aoki J."/>
            <person name="Arakawa T."/>
            <person name="Iida J."/>
            <person name="Imamura K."/>
            <person name="Itoh M."/>
            <person name="Kato T."/>
            <person name="Kawaji H."/>
            <person name="Kawagashira N."/>
            <person name="Kawashima T."/>
            <person name="Kojima M."/>
            <person name="Kondo S."/>
            <person name="Konno H."/>
            <person name="Nakano K."/>
            <person name="Ninomiya N."/>
            <person name="Nishio T."/>
            <person name="Okada M."/>
            <person name="Plessy C."/>
            <person name="Shibata K."/>
            <person name="Shiraki T."/>
            <person name="Suzuki S."/>
            <person name="Tagami M."/>
            <person name="Waki K."/>
            <person name="Watahiki A."/>
            <person name="Okamura-Oho Y."/>
            <person name="Suzuki H."/>
            <person name="Kawai J."/>
            <person name="Hayashizaki Y."/>
        </authorList>
    </citation>
    <scope>NUCLEOTIDE SEQUENCE [LARGE SCALE MRNA]</scope>
    <source>
        <strain>C57BL/6J</strain>
        <tissue>Embryo</tissue>
        <tissue>Kidney</tissue>
    </source>
</reference>
<reference key="2">
    <citation type="journal article" date="2004" name="Genome Res.">
        <title>The status, quality, and expansion of the NIH full-length cDNA project: the Mammalian Gene Collection (MGC).</title>
        <authorList>
            <consortium name="The MGC Project Team"/>
        </authorList>
    </citation>
    <scope>NUCLEOTIDE SEQUENCE [LARGE SCALE MRNA]</scope>
</reference>
<reference key="3">
    <citation type="journal article" date="2010" name="Cell">
        <title>A tissue-specific atlas of mouse protein phosphorylation and expression.</title>
        <authorList>
            <person name="Huttlin E.L."/>
            <person name="Jedrychowski M.P."/>
            <person name="Elias J.E."/>
            <person name="Goswami T."/>
            <person name="Rad R."/>
            <person name="Beausoleil S.A."/>
            <person name="Villen J."/>
            <person name="Haas W."/>
            <person name="Sowa M.E."/>
            <person name="Gygi S.P."/>
        </authorList>
    </citation>
    <scope>IDENTIFICATION BY MASS SPECTROMETRY [LARGE SCALE ANALYSIS]</scope>
    <source>
        <tissue>Spleen</tissue>
    </source>
</reference>
<comment type="function">
    <text evidence="1">May function to silence the spindle checkpoint and allow mitosis to proceed through anaphase by binding MAD2L1 after it has become dissociated from the MAD2L1-CDC20 complex.</text>
</comment>
<comment type="subunit">
    <text evidence="1">Interacts with MAD2L1.</text>
</comment>
<comment type="subcellular location">
    <subcellularLocation>
        <location evidence="1">Nucleus</location>
        <location evidence="1">Nucleoplasm</location>
    </subcellularLocation>
    <subcellularLocation>
        <location evidence="1">Cytoplasm</location>
        <location evidence="1">Cytoskeleton</location>
        <location evidence="1">Spindle</location>
    </subcellularLocation>
    <text evidence="1">During early mitosis, unevenly distributed throughout the nucleoplasm. From metaphase to anaphase, concentrated on the spindle (By similarity).</text>
</comment>
<comment type="similarity">
    <text evidence="3">Belongs to the MAD2L1BP family.</text>
</comment>
<name>MD2BP_MOUSE</name>
<proteinExistence type="evidence at protein level"/>
<accession>Q9DCX1</accession>
<accession>Q99J05</accession>
<accession>Q9D0Y3</accession>
<protein>
    <recommendedName>
        <fullName>MAD2L1-binding protein</fullName>
    </recommendedName>
</protein>